<proteinExistence type="inferred from homology"/>
<accession>A9VNN2</accession>
<keyword id="KW-0067">ATP-binding</keyword>
<keyword id="KW-0460">Magnesium</keyword>
<keyword id="KW-0464">Manganese</keyword>
<keyword id="KW-0479">Metal-binding</keyword>
<keyword id="KW-0547">Nucleotide-binding</keyword>
<keyword id="KW-0548">Nucleotidyltransferase</keyword>
<keyword id="KW-0808">Transferase</keyword>
<organism>
    <name type="scientific">Bacillus mycoides (strain KBAB4)</name>
    <name type="common">Bacillus weihenstephanensis</name>
    <dbReference type="NCBI Taxonomy" id="315730"/>
    <lineage>
        <taxon>Bacteria</taxon>
        <taxon>Bacillati</taxon>
        <taxon>Bacillota</taxon>
        <taxon>Bacilli</taxon>
        <taxon>Bacillales</taxon>
        <taxon>Bacillaceae</taxon>
        <taxon>Bacillus</taxon>
        <taxon>Bacillus cereus group</taxon>
    </lineage>
</organism>
<dbReference type="EC" id="2.7.7.-" evidence="1"/>
<dbReference type="EC" id="2.7.7.108" evidence="1"/>
<dbReference type="EMBL" id="CP000903">
    <property type="protein sequence ID" value="ABY44397.1"/>
    <property type="molecule type" value="Genomic_DNA"/>
</dbReference>
<dbReference type="RefSeq" id="WP_012261363.1">
    <property type="nucleotide sequence ID" value="NC_010184.1"/>
</dbReference>
<dbReference type="SMR" id="A9VNN2"/>
<dbReference type="KEGG" id="bwe:BcerKBAB4_3221"/>
<dbReference type="eggNOG" id="COG0397">
    <property type="taxonomic scope" value="Bacteria"/>
</dbReference>
<dbReference type="HOGENOM" id="CLU_010245_4_1_9"/>
<dbReference type="Proteomes" id="UP000002154">
    <property type="component" value="Chromosome"/>
</dbReference>
<dbReference type="GO" id="GO:0070733">
    <property type="term" value="F:AMPylase activity"/>
    <property type="evidence" value="ECO:0007669"/>
    <property type="project" value="TreeGrafter"/>
</dbReference>
<dbReference type="GO" id="GO:0005524">
    <property type="term" value="F:ATP binding"/>
    <property type="evidence" value="ECO:0007669"/>
    <property type="project" value="UniProtKB-UniRule"/>
</dbReference>
<dbReference type="GO" id="GO:0000287">
    <property type="term" value="F:magnesium ion binding"/>
    <property type="evidence" value="ECO:0007669"/>
    <property type="project" value="UniProtKB-UniRule"/>
</dbReference>
<dbReference type="HAMAP" id="MF_00692">
    <property type="entry name" value="YdiU_SelO"/>
    <property type="match status" value="1"/>
</dbReference>
<dbReference type="InterPro" id="IPR003846">
    <property type="entry name" value="SelO"/>
</dbReference>
<dbReference type="NCBIfam" id="NF000658">
    <property type="entry name" value="PRK00029.1"/>
    <property type="match status" value="1"/>
</dbReference>
<dbReference type="PANTHER" id="PTHR32057">
    <property type="entry name" value="PROTEIN ADENYLYLTRANSFERASE SELO, MITOCHONDRIAL"/>
    <property type="match status" value="1"/>
</dbReference>
<dbReference type="PANTHER" id="PTHR32057:SF14">
    <property type="entry name" value="PROTEIN ADENYLYLTRANSFERASE SELO, MITOCHONDRIAL"/>
    <property type="match status" value="1"/>
</dbReference>
<dbReference type="Pfam" id="PF02696">
    <property type="entry name" value="SelO"/>
    <property type="match status" value="1"/>
</dbReference>
<gene>
    <name evidence="1" type="primary">ydiU</name>
    <name evidence="1" type="synonym">selO</name>
    <name type="ordered locus">BcerKBAB4_3221</name>
</gene>
<comment type="function">
    <text evidence="1">Nucleotidyltransferase involved in the post-translational modification of proteins. It can catalyze the addition of adenosine monophosphate (AMP) or uridine monophosphate (UMP) to a protein, resulting in modifications known as AMPylation and UMPylation.</text>
</comment>
<comment type="catalytic activity">
    <reaction evidence="1">
        <text>L-seryl-[protein] + ATP = 3-O-(5'-adenylyl)-L-seryl-[protein] + diphosphate</text>
        <dbReference type="Rhea" id="RHEA:58120"/>
        <dbReference type="Rhea" id="RHEA-COMP:9863"/>
        <dbReference type="Rhea" id="RHEA-COMP:15073"/>
        <dbReference type="ChEBI" id="CHEBI:29999"/>
        <dbReference type="ChEBI" id="CHEBI:30616"/>
        <dbReference type="ChEBI" id="CHEBI:33019"/>
        <dbReference type="ChEBI" id="CHEBI:142516"/>
        <dbReference type="EC" id="2.7.7.108"/>
    </reaction>
</comment>
<comment type="catalytic activity">
    <reaction evidence="1">
        <text>L-threonyl-[protein] + ATP = 3-O-(5'-adenylyl)-L-threonyl-[protein] + diphosphate</text>
        <dbReference type="Rhea" id="RHEA:54292"/>
        <dbReference type="Rhea" id="RHEA-COMP:11060"/>
        <dbReference type="Rhea" id="RHEA-COMP:13847"/>
        <dbReference type="ChEBI" id="CHEBI:30013"/>
        <dbReference type="ChEBI" id="CHEBI:30616"/>
        <dbReference type="ChEBI" id="CHEBI:33019"/>
        <dbReference type="ChEBI" id="CHEBI:138113"/>
        <dbReference type="EC" id="2.7.7.108"/>
    </reaction>
</comment>
<comment type="catalytic activity">
    <reaction evidence="1">
        <text>L-tyrosyl-[protein] + ATP = O-(5'-adenylyl)-L-tyrosyl-[protein] + diphosphate</text>
        <dbReference type="Rhea" id="RHEA:54288"/>
        <dbReference type="Rhea" id="RHEA-COMP:10136"/>
        <dbReference type="Rhea" id="RHEA-COMP:13846"/>
        <dbReference type="ChEBI" id="CHEBI:30616"/>
        <dbReference type="ChEBI" id="CHEBI:33019"/>
        <dbReference type="ChEBI" id="CHEBI:46858"/>
        <dbReference type="ChEBI" id="CHEBI:83624"/>
        <dbReference type="EC" id="2.7.7.108"/>
    </reaction>
</comment>
<comment type="catalytic activity">
    <reaction evidence="1">
        <text>L-histidyl-[protein] + UTP = N(tele)-(5'-uridylyl)-L-histidyl-[protein] + diphosphate</text>
        <dbReference type="Rhea" id="RHEA:83891"/>
        <dbReference type="Rhea" id="RHEA-COMP:9745"/>
        <dbReference type="Rhea" id="RHEA-COMP:20239"/>
        <dbReference type="ChEBI" id="CHEBI:29979"/>
        <dbReference type="ChEBI" id="CHEBI:33019"/>
        <dbReference type="ChEBI" id="CHEBI:46398"/>
        <dbReference type="ChEBI" id="CHEBI:233474"/>
    </reaction>
</comment>
<comment type="catalytic activity">
    <reaction evidence="1">
        <text>L-seryl-[protein] + UTP = O-(5'-uridylyl)-L-seryl-[protein] + diphosphate</text>
        <dbReference type="Rhea" id="RHEA:64604"/>
        <dbReference type="Rhea" id="RHEA-COMP:9863"/>
        <dbReference type="Rhea" id="RHEA-COMP:16635"/>
        <dbReference type="ChEBI" id="CHEBI:29999"/>
        <dbReference type="ChEBI" id="CHEBI:33019"/>
        <dbReference type="ChEBI" id="CHEBI:46398"/>
        <dbReference type="ChEBI" id="CHEBI:156051"/>
    </reaction>
</comment>
<comment type="catalytic activity">
    <reaction evidence="1">
        <text>L-tyrosyl-[protein] + UTP = O-(5'-uridylyl)-L-tyrosyl-[protein] + diphosphate</text>
        <dbReference type="Rhea" id="RHEA:83887"/>
        <dbReference type="Rhea" id="RHEA-COMP:10136"/>
        <dbReference type="Rhea" id="RHEA-COMP:20238"/>
        <dbReference type="ChEBI" id="CHEBI:33019"/>
        <dbReference type="ChEBI" id="CHEBI:46398"/>
        <dbReference type="ChEBI" id="CHEBI:46858"/>
        <dbReference type="ChEBI" id="CHEBI:90602"/>
    </reaction>
</comment>
<comment type="cofactor">
    <cofactor evidence="1">
        <name>Mg(2+)</name>
        <dbReference type="ChEBI" id="CHEBI:18420"/>
    </cofactor>
    <cofactor evidence="1">
        <name>Mn(2+)</name>
        <dbReference type="ChEBI" id="CHEBI:29035"/>
    </cofactor>
</comment>
<comment type="similarity">
    <text evidence="1">Belongs to the SELO family.</text>
</comment>
<evidence type="ECO:0000255" key="1">
    <source>
        <dbReference type="HAMAP-Rule" id="MF_00692"/>
    </source>
</evidence>
<feature type="chain" id="PRO_1000132090" description="Protein nucleotidyltransferase YdiU">
    <location>
        <begin position="1"/>
        <end position="488"/>
    </location>
</feature>
<feature type="active site" description="Proton acceptor" evidence="1">
    <location>
        <position position="253"/>
    </location>
</feature>
<feature type="binding site" evidence="1">
    <location>
        <position position="91"/>
    </location>
    <ligand>
        <name>ATP</name>
        <dbReference type="ChEBI" id="CHEBI:30616"/>
    </ligand>
</feature>
<feature type="binding site" evidence="1">
    <location>
        <position position="93"/>
    </location>
    <ligand>
        <name>ATP</name>
        <dbReference type="ChEBI" id="CHEBI:30616"/>
    </ligand>
</feature>
<feature type="binding site" evidence="1">
    <location>
        <position position="94"/>
    </location>
    <ligand>
        <name>ATP</name>
        <dbReference type="ChEBI" id="CHEBI:30616"/>
    </ligand>
</feature>
<feature type="binding site" evidence="1">
    <location>
        <position position="114"/>
    </location>
    <ligand>
        <name>ATP</name>
        <dbReference type="ChEBI" id="CHEBI:30616"/>
    </ligand>
</feature>
<feature type="binding site" evidence="1">
    <location>
        <position position="126"/>
    </location>
    <ligand>
        <name>ATP</name>
        <dbReference type="ChEBI" id="CHEBI:30616"/>
    </ligand>
</feature>
<feature type="binding site" evidence="1">
    <location>
        <position position="127"/>
    </location>
    <ligand>
        <name>ATP</name>
        <dbReference type="ChEBI" id="CHEBI:30616"/>
    </ligand>
</feature>
<feature type="binding site" evidence="1">
    <location>
        <position position="177"/>
    </location>
    <ligand>
        <name>ATP</name>
        <dbReference type="ChEBI" id="CHEBI:30616"/>
    </ligand>
</feature>
<feature type="binding site" evidence="1">
    <location>
        <position position="184"/>
    </location>
    <ligand>
        <name>ATP</name>
        <dbReference type="ChEBI" id="CHEBI:30616"/>
    </ligand>
</feature>
<feature type="binding site" evidence="1">
    <location>
        <position position="254"/>
    </location>
    <ligand>
        <name>Mg(2+)</name>
        <dbReference type="ChEBI" id="CHEBI:18420"/>
    </ligand>
</feature>
<feature type="binding site" evidence="1">
    <location>
        <position position="263"/>
    </location>
    <ligand>
        <name>ATP</name>
        <dbReference type="ChEBI" id="CHEBI:30616"/>
    </ligand>
</feature>
<feature type="binding site" evidence="1">
    <location>
        <position position="263"/>
    </location>
    <ligand>
        <name>Mg(2+)</name>
        <dbReference type="ChEBI" id="CHEBI:18420"/>
    </ligand>
</feature>
<reference key="1">
    <citation type="journal article" date="2008" name="Chem. Biol. Interact.">
        <title>Extending the Bacillus cereus group genomics to putative food-borne pathogens of different toxicity.</title>
        <authorList>
            <person name="Lapidus A."/>
            <person name="Goltsman E."/>
            <person name="Auger S."/>
            <person name="Galleron N."/>
            <person name="Segurens B."/>
            <person name="Dossat C."/>
            <person name="Land M.L."/>
            <person name="Broussolle V."/>
            <person name="Brillard J."/>
            <person name="Guinebretiere M.-H."/>
            <person name="Sanchis V."/>
            <person name="Nguen-the C."/>
            <person name="Lereclus D."/>
            <person name="Richardson P."/>
            <person name="Wincker P."/>
            <person name="Weissenbach J."/>
            <person name="Ehrlich S.D."/>
            <person name="Sorokin A."/>
        </authorList>
    </citation>
    <scope>NUCLEOTIDE SEQUENCE [LARGE SCALE GENOMIC DNA]</scope>
    <source>
        <strain>KBAB4</strain>
    </source>
</reference>
<protein>
    <recommendedName>
        <fullName evidence="1">Protein nucleotidyltransferase YdiU</fullName>
        <ecNumber evidence="1">2.7.7.-</ecNumber>
    </recommendedName>
    <alternativeName>
        <fullName evidence="1">Protein adenylyltransferase YdiU</fullName>
        <ecNumber evidence="1">2.7.7.108</ecNumber>
    </alternativeName>
    <alternativeName>
        <fullName evidence="1">Protein uridylyltransferase YdiU</fullName>
        <ecNumber evidence="1">2.7.7.-</ecNumber>
    </alternativeName>
</protein>
<sequence length="488" mass="54898">MTNKNETGWNLESSYTVLPKSFFTEIPPTPVHSPELIKLNNSLAISLGFNPEELKKDAEIAILAGNTIPEGAHPLAQAYAGHQFGHFNVLGDGRALLIGEQITPSGERFDIQLKGSGPTPYSRRGDGRAALGPMLREYIISEAMYALDIPTTRSLAVVSTGEPIYRETKLPGAILTRVASSHIRVGTFQYAAARGSIEDLKALADYTIKRHYPEVESTENPYVALLQEVIKRQASLIAKWQLVGFIHGVMNTDNITISGETIDYGPCAFMDSYNQGTVFSSIDTQGRYAYGNQPYMAAWDLARLAESLIPILHEDEEEALKIAQDEISKFSVQYENNWFLGIKKKLGLFSNEEHDQSLIEKLLKAMEKYKADYTNTFRALTDNILENAPLFKSPEFKEWYELWQSRLERQKESKDDAYKLMKNNNPVIIPRNHRVEEALEAAVKDGDYSVMEKLLQALANPYEYSQEQADYCTPPVPSNRPYRTFCGT</sequence>
<name>SELO_BACMK</name>